<dbReference type="EC" id="6.3.2.2" evidence="1"/>
<dbReference type="EMBL" id="CP001396">
    <property type="protein sequence ID" value="ACR63279.1"/>
    <property type="molecule type" value="Genomic_DNA"/>
</dbReference>
<dbReference type="RefSeq" id="WP_001130654.1">
    <property type="nucleotide sequence ID" value="NC_012759.1"/>
</dbReference>
<dbReference type="SMR" id="C4ZV25"/>
<dbReference type="KEGG" id="ebw:BWG_0452"/>
<dbReference type="HOGENOM" id="CLU_044848_1_1_6"/>
<dbReference type="GO" id="GO:0005524">
    <property type="term" value="F:ATP binding"/>
    <property type="evidence" value="ECO:0007669"/>
    <property type="project" value="UniProtKB-KW"/>
</dbReference>
<dbReference type="GO" id="GO:0004357">
    <property type="term" value="F:glutamate-cysteine ligase activity"/>
    <property type="evidence" value="ECO:0007669"/>
    <property type="project" value="UniProtKB-EC"/>
</dbReference>
<dbReference type="GO" id="GO:0042398">
    <property type="term" value="P:modified amino acid biosynthetic process"/>
    <property type="evidence" value="ECO:0007669"/>
    <property type="project" value="InterPro"/>
</dbReference>
<dbReference type="FunFam" id="3.30.590.20:FF:000002">
    <property type="entry name" value="Putative glutamate--cysteine ligase 2"/>
    <property type="match status" value="1"/>
</dbReference>
<dbReference type="Gene3D" id="3.30.590.20">
    <property type="match status" value="1"/>
</dbReference>
<dbReference type="HAMAP" id="MF_01609">
    <property type="entry name" value="Glu_cys_ligase_2"/>
    <property type="match status" value="1"/>
</dbReference>
<dbReference type="InterPro" id="IPR050141">
    <property type="entry name" value="GCL_type2/YbdK_subfam"/>
</dbReference>
<dbReference type="InterPro" id="IPR006336">
    <property type="entry name" value="GCS2"/>
</dbReference>
<dbReference type="InterPro" id="IPR014746">
    <property type="entry name" value="Gln_synth/guanido_kin_cat_dom"/>
</dbReference>
<dbReference type="InterPro" id="IPR011793">
    <property type="entry name" value="YbdK"/>
</dbReference>
<dbReference type="NCBIfam" id="TIGR02050">
    <property type="entry name" value="gshA_cyan_rel"/>
    <property type="match status" value="1"/>
</dbReference>
<dbReference type="NCBIfam" id="NF010040">
    <property type="entry name" value="PRK13516.1"/>
    <property type="match status" value="1"/>
</dbReference>
<dbReference type="PANTHER" id="PTHR36510">
    <property type="entry name" value="GLUTAMATE--CYSTEINE LIGASE 2-RELATED"/>
    <property type="match status" value="1"/>
</dbReference>
<dbReference type="PANTHER" id="PTHR36510:SF1">
    <property type="entry name" value="GLUTAMATE--CYSTEINE LIGASE 2-RELATED"/>
    <property type="match status" value="1"/>
</dbReference>
<dbReference type="Pfam" id="PF04107">
    <property type="entry name" value="GCS2"/>
    <property type="match status" value="1"/>
</dbReference>
<dbReference type="SUPFAM" id="SSF55931">
    <property type="entry name" value="Glutamine synthetase/guanido kinase"/>
    <property type="match status" value="1"/>
</dbReference>
<sequence>MPLPDFHVSEPFTLGIELEMQVVNPPGYDLSQDSSMLIDAVKNKITAGEVKHDITESMLELATDVCRDINQAAGQFSAMQKVVLQAATDHHLEICGGGTHPFQKWQRQEVCDNERYQRTLENFGYLIQQATVFGQHVHVGCASGDDAIYLLHGLSRFVPHFIALSAASPYMQGTDTRFASSRPNIFSAFPDNGPMPWVSNWQQFEALFRCLSYTTMIDSIKDLHWDIRPSPHFGTVEVRVMDTPLTLSHAVNMAGLIQATAHWLLTERPFKHQEKDYLLYKFNRFQACRYGLEGVITDPHTGDRRPLTEDTLRLLEKIAPSAHKIGASSAIEALHRQVVSGLNEAQLMRDFVADGGSLIGLVKKHCEIWAGD</sequence>
<gene>
    <name type="primary">ybdK</name>
    <name type="ordered locus">BWG_0452</name>
</gene>
<name>GCS2_ECOBW</name>
<accession>C4ZV25</accession>
<comment type="function">
    <text evidence="1">ATP-dependent carboxylate-amine ligase which exhibits weak glutamate--cysteine ligase activity.</text>
</comment>
<comment type="catalytic activity">
    <reaction evidence="1">
        <text>L-cysteine + L-glutamate + ATP = gamma-L-glutamyl-L-cysteine + ADP + phosphate + H(+)</text>
        <dbReference type="Rhea" id="RHEA:13285"/>
        <dbReference type="ChEBI" id="CHEBI:15378"/>
        <dbReference type="ChEBI" id="CHEBI:29985"/>
        <dbReference type="ChEBI" id="CHEBI:30616"/>
        <dbReference type="ChEBI" id="CHEBI:35235"/>
        <dbReference type="ChEBI" id="CHEBI:43474"/>
        <dbReference type="ChEBI" id="CHEBI:58173"/>
        <dbReference type="ChEBI" id="CHEBI:456216"/>
        <dbReference type="EC" id="6.3.2.2"/>
    </reaction>
</comment>
<comment type="subunit">
    <text evidence="1">Homodimer.</text>
</comment>
<comment type="similarity">
    <text evidence="1">Belongs to the glutamate--cysteine ligase type 2 family. YbdK subfamily.</text>
</comment>
<organism>
    <name type="scientific">Escherichia coli (strain K12 / MC4100 / BW2952)</name>
    <dbReference type="NCBI Taxonomy" id="595496"/>
    <lineage>
        <taxon>Bacteria</taxon>
        <taxon>Pseudomonadati</taxon>
        <taxon>Pseudomonadota</taxon>
        <taxon>Gammaproteobacteria</taxon>
        <taxon>Enterobacterales</taxon>
        <taxon>Enterobacteriaceae</taxon>
        <taxon>Escherichia</taxon>
    </lineage>
</organism>
<keyword id="KW-0067">ATP-binding</keyword>
<keyword id="KW-0436">Ligase</keyword>
<keyword id="KW-0547">Nucleotide-binding</keyword>
<protein>
    <recommendedName>
        <fullName evidence="1">Putative glutamate--cysteine ligase 2</fullName>
        <ecNumber evidence="1">6.3.2.2</ecNumber>
    </recommendedName>
    <alternativeName>
        <fullName evidence="1">Gamma-glutamylcysteine synthetase 2</fullName>
        <shortName evidence="1">GCS 2</shortName>
        <shortName evidence="1">Gamma-GCS 2</shortName>
    </alternativeName>
</protein>
<proteinExistence type="inferred from homology"/>
<reference key="1">
    <citation type="journal article" date="2009" name="J. Bacteriol.">
        <title>Genomic sequencing reveals regulatory mutations and recombinational events in the widely used MC4100 lineage of Escherichia coli K-12.</title>
        <authorList>
            <person name="Ferenci T."/>
            <person name="Zhou Z."/>
            <person name="Betteridge T."/>
            <person name="Ren Y."/>
            <person name="Liu Y."/>
            <person name="Feng L."/>
            <person name="Reeves P.R."/>
            <person name="Wang L."/>
        </authorList>
    </citation>
    <scope>NUCLEOTIDE SEQUENCE [LARGE SCALE GENOMIC DNA]</scope>
    <source>
        <strain>K12 / MC4100 / BW2952</strain>
    </source>
</reference>
<feature type="chain" id="PRO_1000215702" description="Putative glutamate--cysteine ligase 2">
    <location>
        <begin position="1"/>
        <end position="372"/>
    </location>
</feature>
<evidence type="ECO:0000255" key="1">
    <source>
        <dbReference type="HAMAP-Rule" id="MF_01609"/>
    </source>
</evidence>